<reference key="1">
    <citation type="journal article" date="2000" name="Nature">
        <title>Sequence and analysis of chromosome 5 of the plant Arabidopsis thaliana.</title>
        <authorList>
            <person name="Tabata S."/>
            <person name="Kaneko T."/>
            <person name="Nakamura Y."/>
            <person name="Kotani H."/>
            <person name="Kato T."/>
            <person name="Asamizu E."/>
            <person name="Miyajima N."/>
            <person name="Sasamoto S."/>
            <person name="Kimura T."/>
            <person name="Hosouchi T."/>
            <person name="Kawashima K."/>
            <person name="Kohara M."/>
            <person name="Matsumoto M."/>
            <person name="Matsuno A."/>
            <person name="Muraki A."/>
            <person name="Nakayama S."/>
            <person name="Nakazaki N."/>
            <person name="Naruo K."/>
            <person name="Okumura S."/>
            <person name="Shinpo S."/>
            <person name="Takeuchi C."/>
            <person name="Wada T."/>
            <person name="Watanabe A."/>
            <person name="Yamada M."/>
            <person name="Yasuda M."/>
            <person name="Sato S."/>
            <person name="de la Bastide M."/>
            <person name="Huang E."/>
            <person name="Spiegel L."/>
            <person name="Gnoj L."/>
            <person name="O'Shaughnessy A."/>
            <person name="Preston R."/>
            <person name="Habermann K."/>
            <person name="Murray J."/>
            <person name="Johnson D."/>
            <person name="Rohlfing T."/>
            <person name="Nelson J."/>
            <person name="Stoneking T."/>
            <person name="Pepin K."/>
            <person name="Spieth J."/>
            <person name="Sekhon M."/>
            <person name="Armstrong J."/>
            <person name="Becker M."/>
            <person name="Belter E."/>
            <person name="Cordum H."/>
            <person name="Cordes M."/>
            <person name="Courtney L."/>
            <person name="Courtney W."/>
            <person name="Dante M."/>
            <person name="Du H."/>
            <person name="Edwards J."/>
            <person name="Fryman J."/>
            <person name="Haakensen B."/>
            <person name="Lamar E."/>
            <person name="Latreille P."/>
            <person name="Leonard S."/>
            <person name="Meyer R."/>
            <person name="Mulvaney E."/>
            <person name="Ozersky P."/>
            <person name="Riley A."/>
            <person name="Strowmatt C."/>
            <person name="Wagner-McPherson C."/>
            <person name="Wollam A."/>
            <person name="Yoakum M."/>
            <person name="Bell M."/>
            <person name="Dedhia N."/>
            <person name="Parnell L."/>
            <person name="Shah R."/>
            <person name="Rodriguez M."/>
            <person name="Hoon See L."/>
            <person name="Vil D."/>
            <person name="Baker J."/>
            <person name="Kirchoff K."/>
            <person name="Toth K."/>
            <person name="King L."/>
            <person name="Bahret A."/>
            <person name="Miller B."/>
            <person name="Marra M.A."/>
            <person name="Martienssen R."/>
            <person name="McCombie W.R."/>
            <person name="Wilson R.K."/>
            <person name="Murphy G."/>
            <person name="Bancroft I."/>
            <person name="Volckaert G."/>
            <person name="Wambutt R."/>
            <person name="Duesterhoeft A."/>
            <person name="Stiekema W."/>
            <person name="Pohl T."/>
            <person name="Entian K.-D."/>
            <person name="Terryn N."/>
            <person name="Hartley N."/>
            <person name="Bent E."/>
            <person name="Johnson S."/>
            <person name="Langham S.-A."/>
            <person name="McCullagh B."/>
            <person name="Robben J."/>
            <person name="Grymonprez B."/>
            <person name="Zimmermann W."/>
            <person name="Ramsperger U."/>
            <person name="Wedler H."/>
            <person name="Balke K."/>
            <person name="Wedler E."/>
            <person name="Peters S."/>
            <person name="van Staveren M."/>
            <person name="Dirkse W."/>
            <person name="Mooijman P."/>
            <person name="Klein Lankhorst R."/>
            <person name="Weitzenegger T."/>
            <person name="Bothe G."/>
            <person name="Rose M."/>
            <person name="Hauf J."/>
            <person name="Berneiser S."/>
            <person name="Hempel S."/>
            <person name="Feldpausch M."/>
            <person name="Lamberth S."/>
            <person name="Villarroel R."/>
            <person name="Gielen J."/>
            <person name="Ardiles W."/>
            <person name="Bents O."/>
            <person name="Lemcke K."/>
            <person name="Kolesov G."/>
            <person name="Mayer K.F.X."/>
            <person name="Rudd S."/>
            <person name="Schoof H."/>
            <person name="Schueller C."/>
            <person name="Zaccaria P."/>
            <person name="Mewes H.-W."/>
            <person name="Bevan M."/>
            <person name="Fransz P.F."/>
        </authorList>
    </citation>
    <scope>NUCLEOTIDE SEQUENCE [LARGE SCALE GENOMIC DNA]</scope>
    <source>
        <strain>cv. Columbia</strain>
    </source>
</reference>
<reference key="2">
    <citation type="journal article" date="2017" name="Plant J.">
        <title>Araport11: a complete reannotation of the Arabidopsis thaliana reference genome.</title>
        <authorList>
            <person name="Cheng C.Y."/>
            <person name="Krishnakumar V."/>
            <person name="Chan A.P."/>
            <person name="Thibaud-Nissen F."/>
            <person name="Schobel S."/>
            <person name="Town C.D."/>
        </authorList>
    </citation>
    <scope>GENOME REANNOTATION</scope>
    <source>
        <strain>cv. Columbia</strain>
    </source>
</reference>
<organism>
    <name type="scientific">Arabidopsis thaliana</name>
    <name type="common">Mouse-ear cress</name>
    <dbReference type="NCBI Taxonomy" id="3702"/>
    <lineage>
        <taxon>Eukaryota</taxon>
        <taxon>Viridiplantae</taxon>
        <taxon>Streptophyta</taxon>
        <taxon>Embryophyta</taxon>
        <taxon>Tracheophyta</taxon>
        <taxon>Spermatophyta</taxon>
        <taxon>Magnoliopsida</taxon>
        <taxon>eudicotyledons</taxon>
        <taxon>Gunneridae</taxon>
        <taxon>Pentapetalae</taxon>
        <taxon>rosids</taxon>
        <taxon>malvids</taxon>
        <taxon>Brassicales</taxon>
        <taxon>Brassicaceae</taxon>
        <taxon>Camelineae</taxon>
        <taxon>Arabidopsis</taxon>
    </lineage>
</organism>
<protein>
    <recommendedName>
        <fullName>Putative F-box protein At5g15670</fullName>
    </recommendedName>
</protein>
<gene>
    <name type="ordered locus">At5g15670</name>
    <name type="ORF">F14F8.50</name>
</gene>
<keyword id="KW-1185">Reference proteome</keyword>
<accession>Q9LFV9</accession>
<proteinExistence type="predicted"/>
<sequence>MMRRRNKKTKTVISNPETLEERNKFDEIPHDLVIEILGRLPAKSVARFLTVSKLWATSIRSLDFIKSYPLGSSSKPRTLVASKQVVANPSTGRTIPLPRVKTRRTIATSFFGYDSVSDQYKVLCMTVKAYGDLRDESSQHQVFTLGAKKKSFRMIDTSIIPHRPCSNGVCIDSVVYYVAKTGAGMLHLCIMRFDLSSEILDLFTSLPQEIRPPS</sequence>
<name>FB258_ARATH</name>
<feature type="chain" id="PRO_0000283525" description="Putative F-box protein At5g15670">
    <location>
        <begin position="1"/>
        <end position="214"/>
    </location>
</feature>
<feature type="domain" description="F-box">
    <location>
        <begin position="22"/>
        <end position="68"/>
    </location>
</feature>
<dbReference type="EMBL" id="AL391144">
    <property type="protein sequence ID" value="CAC01766.1"/>
    <property type="molecule type" value="Genomic_DNA"/>
</dbReference>
<dbReference type="EMBL" id="CP002688">
    <property type="protein sequence ID" value="AED92190.1"/>
    <property type="molecule type" value="Genomic_DNA"/>
</dbReference>
<dbReference type="PIR" id="T51396">
    <property type="entry name" value="T51396"/>
</dbReference>
<dbReference type="RefSeq" id="NP_197071.1">
    <property type="nucleotide sequence ID" value="NM_121571.1"/>
</dbReference>
<dbReference type="PaxDb" id="3702-AT5G15670.1"/>
<dbReference type="EnsemblPlants" id="AT5G15670.1">
    <property type="protein sequence ID" value="AT5G15670.1"/>
    <property type="gene ID" value="AT5G15670"/>
</dbReference>
<dbReference type="GeneID" id="831421"/>
<dbReference type="Gramene" id="AT5G15670.1">
    <property type="protein sequence ID" value="AT5G15670.1"/>
    <property type="gene ID" value="AT5G15670"/>
</dbReference>
<dbReference type="KEGG" id="ath:AT5G15670"/>
<dbReference type="Araport" id="AT5G15670"/>
<dbReference type="TAIR" id="AT5G15670"/>
<dbReference type="eggNOG" id="ENOG502SXXQ">
    <property type="taxonomic scope" value="Eukaryota"/>
</dbReference>
<dbReference type="HOGENOM" id="CLU_027176_8_3_1"/>
<dbReference type="InParanoid" id="Q9LFV9"/>
<dbReference type="OMA" id="LCIMRFD"/>
<dbReference type="OrthoDB" id="1092152at2759"/>
<dbReference type="PhylomeDB" id="Q9LFV9"/>
<dbReference type="PRO" id="PR:Q9LFV9"/>
<dbReference type="Proteomes" id="UP000006548">
    <property type="component" value="Chromosome 5"/>
</dbReference>
<dbReference type="ExpressionAtlas" id="Q9LFV9">
    <property type="expression patterns" value="baseline and differential"/>
</dbReference>
<dbReference type="InterPro" id="IPR013187">
    <property type="entry name" value="F-box-assoc_dom_typ3"/>
</dbReference>
<dbReference type="InterPro" id="IPR017451">
    <property type="entry name" value="F-box-assoc_interact_dom"/>
</dbReference>
<dbReference type="InterPro" id="IPR036047">
    <property type="entry name" value="F-box-like_dom_sf"/>
</dbReference>
<dbReference type="InterPro" id="IPR001810">
    <property type="entry name" value="F-box_dom"/>
</dbReference>
<dbReference type="NCBIfam" id="TIGR01640">
    <property type="entry name" value="F_box_assoc_1"/>
    <property type="match status" value="1"/>
</dbReference>
<dbReference type="PANTHER" id="PTHR31111">
    <property type="entry name" value="BNAA05G37150D PROTEIN-RELATED"/>
    <property type="match status" value="1"/>
</dbReference>
<dbReference type="PANTHER" id="PTHR31111:SF67">
    <property type="entry name" value="F-BOX DOMAIN-CONTAINING PROTEIN"/>
    <property type="match status" value="1"/>
</dbReference>
<dbReference type="Pfam" id="PF00646">
    <property type="entry name" value="F-box"/>
    <property type="match status" value="1"/>
</dbReference>
<dbReference type="Pfam" id="PF08268">
    <property type="entry name" value="FBA_3"/>
    <property type="match status" value="1"/>
</dbReference>
<dbReference type="SMART" id="SM00256">
    <property type="entry name" value="FBOX"/>
    <property type="match status" value="1"/>
</dbReference>
<dbReference type="SUPFAM" id="SSF81383">
    <property type="entry name" value="F-box domain"/>
    <property type="match status" value="1"/>
</dbReference>